<feature type="initiator methionine" description="Removed" evidence="1">
    <location>
        <position position="1"/>
    </location>
</feature>
<feature type="chain" id="PRO_0000228725" description="Histone H2A.1">
    <location>
        <begin position="2"/>
        <end position="132"/>
    </location>
</feature>
<feature type="region of interest" description="Disordered" evidence="2">
    <location>
        <begin position="1"/>
        <end position="21"/>
    </location>
</feature>
<feature type="short sequence motif" description="[ST]-Q motif">
    <location>
        <begin position="129"/>
        <end position="130"/>
    </location>
</feature>
<feature type="site" description="Not ubiquitinated" evidence="3">
    <location>
        <position position="119"/>
    </location>
</feature>
<feature type="modified residue" description="N-acetylserine" evidence="1">
    <location>
        <position position="2"/>
    </location>
</feature>
<feature type="modified residue" description="N6-acetyllysine" evidence="1">
    <location>
        <position position="5"/>
    </location>
</feature>
<feature type="modified residue" description="N6-acetyllysine" evidence="1">
    <location>
        <position position="7"/>
    </location>
</feature>
<feature type="modified residue" description="N5-methylglutamine" evidence="1">
    <location>
        <position position="105"/>
    </location>
</feature>
<feature type="modified residue" description="Phosphoserine" evidence="1">
    <location>
        <position position="129"/>
    </location>
</feature>
<accession>Q59SU5</accession>
<accession>A0A1D8PK04</accession>
<comment type="function">
    <text>Core component of nucleosome which plays a central role in DNA double strand break (DSB) repair. Nucleosomes wrap and compact DNA into chromatin, limiting DNA accessibility to the cellular machineries which require DNA as a template. Histones thereby play a central role in transcription regulation, DNA repair, DNA replication and chromosomal stability. DNA accessibility is regulated via a complex set of post-translational modifications of histones, also called histone code, and nucleosome remodeling.</text>
</comment>
<comment type="subunit">
    <text>The nucleosome is a histone octamer containing two molecules each of H2A, H2B, H3 and H4 assembled in one H3-H4 heterotetramer and two H2A-H2B heterodimers. The octamer wraps approximately 147 bp of DNA.</text>
</comment>
<comment type="subcellular location">
    <subcellularLocation>
        <location evidence="1">Nucleus</location>
    </subcellularLocation>
    <subcellularLocation>
        <location evidence="1">Chromosome</location>
    </subcellularLocation>
</comment>
<comment type="domain">
    <text>The [ST]-Q motif constitutes a recognition sequence for kinases from the PI3/PI4-kinase family.</text>
</comment>
<comment type="PTM">
    <text evidence="1">Phosphorylated to form H2AS128ph (gamma-H2A) in response to DNA double-strand breaks (DSBs) generated by exogenous genotoxic agents and by stalled replication forks. Phosphorylation is dependent on the DNA damage checkpoint kinases MEC1/ATR and TEL1/ATM, spreads on either side of a detected DSB site and may mark the surrounding chromatin for recruitment of proteins required for DNA damage signaling and repair. Gamma-H2A is removed from the DNA prior to the strand invasion-primer extension step of the repair process and subsequently dephosphorylated. Dephosphorylation is necessary for efficient recovery from the DNA damage checkpoint (By similarity).</text>
</comment>
<comment type="PTM">
    <text evidence="1">Acetylated by ESA1 to form H2AK4ac and H2AK7ac.</text>
</comment>
<comment type="miscellaneous">
    <text evidence="3">In contrast to vertebrates and insects, its C-terminus is not monoubiquitinated.</text>
</comment>
<comment type="similarity">
    <text evidence="3">Belongs to the histone H2A family.</text>
</comment>
<comment type="caution">
    <text evidence="3">To ensure consistency between histone entries, we follow the 'Brno' nomenclature for histone modifications, with positions referring to those used in the literature for the 'closest' model organism. Due to slight variations in histone sequences between organisms and to the presence of initiator methionine in UniProtKB/Swiss-Prot sequences, the actual positions of modified amino acids in the sequence generally differ. In this entry the following conventions are used: H2AK4ac = acetylated Lys-5; H2AK7ac = acetylated Lys-7; H2AS128ph = phosphorylated Ser-129.</text>
</comment>
<organism>
    <name type="scientific">Candida albicans (strain SC5314 / ATCC MYA-2876)</name>
    <name type="common">Yeast</name>
    <dbReference type="NCBI Taxonomy" id="237561"/>
    <lineage>
        <taxon>Eukaryota</taxon>
        <taxon>Fungi</taxon>
        <taxon>Dikarya</taxon>
        <taxon>Ascomycota</taxon>
        <taxon>Saccharomycotina</taxon>
        <taxon>Pichiomycetes</taxon>
        <taxon>Debaryomycetaceae</taxon>
        <taxon>Candida/Lodderomyces clade</taxon>
        <taxon>Candida</taxon>
    </lineage>
</organism>
<proteinExistence type="inferred from homology"/>
<evidence type="ECO:0000250" key="1"/>
<evidence type="ECO:0000256" key="2">
    <source>
        <dbReference type="SAM" id="MobiDB-lite"/>
    </source>
</evidence>
<evidence type="ECO:0000305" key="3"/>
<gene>
    <name type="primary">HTA1</name>
    <name type="ordered locus">CAALFM_C303910WA</name>
    <name type="ORF">CaO19.14186</name>
    <name type="ORF">CaO19.6924</name>
</gene>
<sequence length="132" mass="14009">MSGGKGKAGTSEKASTSRSAKAGLTFPVGRVHRLLRKGNYAQRIGSGAPVYLTSVLEYLAAEILELAGNAARDNKKSRIIPRHLQLAIRNDEELNKLLGDVTIAQGGVLPNIHQNLLPKKSGKGGVKASQEL</sequence>
<reference key="1">
    <citation type="journal article" date="2004" name="Proc. Natl. Acad. Sci. U.S.A.">
        <title>The diploid genome sequence of Candida albicans.</title>
        <authorList>
            <person name="Jones T."/>
            <person name="Federspiel N.A."/>
            <person name="Chibana H."/>
            <person name="Dungan J."/>
            <person name="Kalman S."/>
            <person name="Magee B.B."/>
            <person name="Newport G."/>
            <person name="Thorstenson Y.R."/>
            <person name="Agabian N."/>
            <person name="Magee P.T."/>
            <person name="Davis R.W."/>
            <person name="Scherer S."/>
        </authorList>
    </citation>
    <scope>NUCLEOTIDE SEQUENCE [LARGE SCALE GENOMIC DNA]</scope>
    <source>
        <strain>SC5314 / ATCC MYA-2876</strain>
    </source>
</reference>
<reference key="2">
    <citation type="journal article" date="2007" name="Genome Biol.">
        <title>Assembly of the Candida albicans genome into sixteen supercontigs aligned on the eight chromosomes.</title>
        <authorList>
            <person name="van het Hoog M."/>
            <person name="Rast T.J."/>
            <person name="Martchenko M."/>
            <person name="Grindle S."/>
            <person name="Dignard D."/>
            <person name="Hogues H."/>
            <person name="Cuomo C."/>
            <person name="Berriman M."/>
            <person name="Scherer S."/>
            <person name="Magee B.B."/>
            <person name="Whiteway M."/>
            <person name="Chibana H."/>
            <person name="Nantel A."/>
            <person name="Magee P.T."/>
        </authorList>
    </citation>
    <scope>GENOME REANNOTATION</scope>
    <source>
        <strain>SC5314 / ATCC MYA-2876</strain>
    </source>
</reference>
<reference key="3">
    <citation type="journal article" date="2013" name="Genome Biol.">
        <title>Assembly of a phased diploid Candida albicans genome facilitates allele-specific measurements and provides a simple model for repeat and indel structure.</title>
        <authorList>
            <person name="Muzzey D."/>
            <person name="Schwartz K."/>
            <person name="Weissman J.S."/>
            <person name="Sherlock G."/>
        </authorList>
    </citation>
    <scope>NUCLEOTIDE SEQUENCE [LARGE SCALE GENOMIC DNA]</scope>
    <scope>GENOME REANNOTATION</scope>
    <source>
        <strain>SC5314 / ATCC MYA-2876</strain>
    </source>
</reference>
<name>H2A1_CANAL</name>
<dbReference type="EMBL" id="CP017625">
    <property type="protein sequence ID" value="AOW28418.1"/>
    <property type="molecule type" value="Genomic_DNA"/>
</dbReference>
<dbReference type="RefSeq" id="XP_712725.1">
    <property type="nucleotide sequence ID" value="XM_707632.2"/>
</dbReference>
<dbReference type="SMR" id="Q59SU5"/>
<dbReference type="FunCoup" id="Q59SU5">
    <property type="interactions" value="1173"/>
</dbReference>
<dbReference type="STRING" id="237561.Q59SU5"/>
<dbReference type="EnsemblFungi" id="C3_03910W_A-T">
    <property type="protein sequence ID" value="C3_03910W_A-T-p1"/>
    <property type="gene ID" value="C3_03910W_A"/>
</dbReference>
<dbReference type="GeneID" id="3645658"/>
<dbReference type="KEGG" id="cal:CAALFM_C303910WA"/>
<dbReference type="CGD" id="CAL0000179664">
    <property type="gene designation" value="HTA1"/>
</dbReference>
<dbReference type="VEuPathDB" id="FungiDB:C3_03910W_A"/>
<dbReference type="eggNOG" id="KOG1756">
    <property type="taxonomic scope" value="Eukaryota"/>
</dbReference>
<dbReference type="HOGENOM" id="CLU_062828_3_1_1"/>
<dbReference type="InParanoid" id="Q59SU5"/>
<dbReference type="OMA" id="CALESQH"/>
<dbReference type="OrthoDB" id="9421954at2759"/>
<dbReference type="PRO" id="PR:Q59SU5"/>
<dbReference type="Proteomes" id="UP000000559">
    <property type="component" value="Chromosome 3"/>
</dbReference>
<dbReference type="GO" id="GO:0000786">
    <property type="term" value="C:nucleosome"/>
    <property type="evidence" value="ECO:0000318"/>
    <property type="project" value="GO_Central"/>
</dbReference>
<dbReference type="GO" id="GO:0005634">
    <property type="term" value="C:nucleus"/>
    <property type="evidence" value="ECO:0000318"/>
    <property type="project" value="GO_Central"/>
</dbReference>
<dbReference type="GO" id="GO:0003677">
    <property type="term" value="F:DNA binding"/>
    <property type="evidence" value="ECO:0000314"/>
    <property type="project" value="CGD"/>
</dbReference>
<dbReference type="GO" id="GO:0046982">
    <property type="term" value="F:protein heterodimerization activity"/>
    <property type="evidence" value="ECO:0007669"/>
    <property type="project" value="InterPro"/>
</dbReference>
<dbReference type="GO" id="GO:0030527">
    <property type="term" value="F:structural constituent of chromatin"/>
    <property type="evidence" value="ECO:0000318"/>
    <property type="project" value="GO_Central"/>
</dbReference>
<dbReference type="GO" id="GO:0006281">
    <property type="term" value="P:DNA repair"/>
    <property type="evidence" value="ECO:0007669"/>
    <property type="project" value="UniProtKB-KW"/>
</dbReference>
<dbReference type="GO" id="GO:0031507">
    <property type="term" value="P:heterochromatin formation"/>
    <property type="evidence" value="ECO:0000318"/>
    <property type="project" value="GO_Central"/>
</dbReference>
<dbReference type="CDD" id="cd00074">
    <property type="entry name" value="HFD_H2A"/>
    <property type="match status" value="1"/>
</dbReference>
<dbReference type="FunFam" id="1.10.20.10:FF:000008">
    <property type="entry name" value="Histone H2A"/>
    <property type="match status" value="1"/>
</dbReference>
<dbReference type="Gene3D" id="1.10.20.10">
    <property type="entry name" value="Histone, subunit A"/>
    <property type="match status" value="1"/>
</dbReference>
<dbReference type="InterPro" id="IPR009072">
    <property type="entry name" value="Histone-fold"/>
</dbReference>
<dbReference type="InterPro" id="IPR002119">
    <property type="entry name" value="Histone_H2A"/>
</dbReference>
<dbReference type="InterPro" id="IPR007125">
    <property type="entry name" value="Histone_H2A/H2B/H3"/>
</dbReference>
<dbReference type="InterPro" id="IPR032454">
    <property type="entry name" value="Histone_H2A_C"/>
</dbReference>
<dbReference type="InterPro" id="IPR032458">
    <property type="entry name" value="Histone_H2A_CS"/>
</dbReference>
<dbReference type="PANTHER" id="PTHR23430">
    <property type="entry name" value="HISTONE H2A"/>
    <property type="match status" value="1"/>
</dbReference>
<dbReference type="Pfam" id="PF00125">
    <property type="entry name" value="Histone"/>
    <property type="match status" value="1"/>
</dbReference>
<dbReference type="Pfam" id="PF16211">
    <property type="entry name" value="Histone_H2A_C"/>
    <property type="match status" value="1"/>
</dbReference>
<dbReference type="PRINTS" id="PR00620">
    <property type="entry name" value="HISTONEH2A"/>
</dbReference>
<dbReference type="SMART" id="SM00414">
    <property type="entry name" value="H2A"/>
    <property type="match status" value="1"/>
</dbReference>
<dbReference type="SUPFAM" id="SSF47113">
    <property type="entry name" value="Histone-fold"/>
    <property type="match status" value="1"/>
</dbReference>
<dbReference type="PROSITE" id="PS00046">
    <property type="entry name" value="HISTONE_H2A"/>
    <property type="match status" value="1"/>
</dbReference>
<protein>
    <recommendedName>
        <fullName>Histone H2A.1</fullName>
    </recommendedName>
</protein>
<keyword id="KW-0007">Acetylation</keyword>
<keyword id="KW-0158">Chromosome</keyword>
<keyword id="KW-0227">DNA damage</keyword>
<keyword id="KW-0234">DNA repair</keyword>
<keyword id="KW-0238">DNA-binding</keyword>
<keyword id="KW-0488">Methylation</keyword>
<keyword id="KW-0544">Nucleosome core</keyword>
<keyword id="KW-0539">Nucleus</keyword>
<keyword id="KW-0597">Phosphoprotein</keyword>
<keyword id="KW-1185">Reference proteome</keyword>